<proteinExistence type="inferred from homology"/>
<accession>C6DH98</accession>
<dbReference type="EC" id="1.1.5.3" evidence="1"/>
<dbReference type="EMBL" id="CP001657">
    <property type="protein sequence ID" value="ACT14971.1"/>
    <property type="molecule type" value="Genomic_DNA"/>
</dbReference>
<dbReference type="RefSeq" id="WP_015842052.1">
    <property type="nucleotide sequence ID" value="NC_012917.1"/>
</dbReference>
<dbReference type="STRING" id="561230.PC1_3956"/>
<dbReference type="KEGG" id="pct:PC1_3956"/>
<dbReference type="eggNOG" id="COG3075">
    <property type="taxonomic scope" value="Bacteria"/>
</dbReference>
<dbReference type="HOGENOM" id="CLU_047793_0_0_6"/>
<dbReference type="OrthoDB" id="6395323at2"/>
<dbReference type="UniPathway" id="UPA00618">
    <property type="reaction ID" value="UER00673"/>
</dbReference>
<dbReference type="Proteomes" id="UP000002736">
    <property type="component" value="Chromosome"/>
</dbReference>
<dbReference type="GO" id="GO:0009331">
    <property type="term" value="C:glycerol-3-phosphate dehydrogenase (FAD) complex"/>
    <property type="evidence" value="ECO:0007669"/>
    <property type="project" value="InterPro"/>
</dbReference>
<dbReference type="GO" id="GO:0004368">
    <property type="term" value="F:glycerol-3-phosphate dehydrogenase (quinone) activity"/>
    <property type="evidence" value="ECO:0007669"/>
    <property type="project" value="UniProtKB-UniRule"/>
</dbReference>
<dbReference type="GO" id="GO:0019563">
    <property type="term" value="P:glycerol catabolic process"/>
    <property type="evidence" value="ECO:0007669"/>
    <property type="project" value="UniProtKB-UniRule"/>
</dbReference>
<dbReference type="Gene3D" id="3.50.50.60">
    <property type="entry name" value="FAD/NAD(P)-binding domain"/>
    <property type="match status" value="1"/>
</dbReference>
<dbReference type="HAMAP" id="MF_00753">
    <property type="entry name" value="Glycerol3P_GlpB"/>
    <property type="match status" value="1"/>
</dbReference>
<dbReference type="InterPro" id="IPR003953">
    <property type="entry name" value="FAD-dep_OxRdtase_2_FAD-bd"/>
</dbReference>
<dbReference type="InterPro" id="IPR036188">
    <property type="entry name" value="FAD/NAD-bd_sf"/>
</dbReference>
<dbReference type="InterPro" id="IPR009158">
    <property type="entry name" value="G3P_DH_GlpB_su"/>
</dbReference>
<dbReference type="NCBIfam" id="TIGR03378">
    <property type="entry name" value="glycerol3P_GlpB"/>
    <property type="match status" value="1"/>
</dbReference>
<dbReference type="NCBIfam" id="NF003718">
    <property type="entry name" value="PRK05329.1-1"/>
    <property type="match status" value="1"/>
</dbReference>
<dbReference type="NCBIfam" id="NF003719">
    <property type="entry name" value="PRK05329.1-2"/>
    <property type="match status" value="1"/>
</dbReference>
<dbReference type="NCBIfam" id="NF003720">
    <property type="entry name" value="PRK05329.1-3"/>
    <property type="match status" value="1"/>
</dbReference>
<dbReference type="NCBIfam" id="NF003721">
    <property type="entry name" value="PRK05329.1-4"/>
    <property type="match status" value="1"/>
</dbReference>
<dbReference type="PANTHER" id="PTHR43734:SF7">
    <property type="entry name" value="4,4'-DIAPONEUROSPORENE OXYGENASE"/>
    <property type="match status" value="1"/>
</dbReference>
<dbReference type="PANTHER" id="PTHR43734">
    <property type="entry name" value="PHYTOENE DESATURASE"/>
    <property type="match status" value="1"/>
</dbReference>
<dbReference type="Pfam" id="PF00890">
    <property type="entry name" value="FAD_binding_2"/>
    <property type="match status" value="1"/>
</dbReference>
<dbReference type="PIRSF" id="PIRSF000141">
    <property type="entry name" value="Anaerobic_G3P_dh"/>
    <property type="match status" value="1"/>
</dbReference>
<dbReference type="SUPFAM" id="SSF51905">
    <property type="entry name" value="FAD/NAD(P)-binding domain"/>
    <property type="match status" value="1"/>
</dbReference>
<comment type="function">
    <text evidence="1">Conversion of glycerol 3-phosphate to dihydroxyacetone. Uses fumarate or nitrate as electron acceptor.</text>
</comment>
<comment type="catalytic activity">
    <reaction evidence="1">
        <text>a quinone + sn-glycerol 3-phosphate = dihydroxyacetone phosphate + a quinol</text>
        <dbReference type="Rhea" id="RHEA:18977"/>
        <dbReference type="ChEBI" id="CHEBI:24646"/>
        <dbReference type="ChEBI" id="CHEBI:57597"/>
        <dbReference type="ChEBI" id="CHEBI:57642"/>
        <dbReference type="ChEBI" id="CHEBI:132124"/>
        <dbReference type="EC" id="1.1.5.3"/>
    </reaction>
</comment>
<comment type="cofactor">
    <cofactor evidence="1">
        <name>FMN</name>
        <dbReference type="ChEBI" id="CHEBI:58210"/>
    </cofactor>
</comment>
<comment type="pathway">
    <text evidence="1">Polyol metabolism; glycerol degradation via glycerol kinase pathway; glycerone phosphate from sn-glycerol 3-phosphate (anaerobic route): step 1/1.</text>
</comment>
<comment type="subunit">
    <text evidence="1">Composed of a catalytic GlpA/B dimer and of membrane bound GlpC.</text>
</comment>
<comment type="similarity">
    <text evidence="1">Belongs to the anaerobic G-3-P dehydrogenase subunit B family.</text>
</comment>
<gene>
    <name evidence="1" type="primary">glpB</name>
    <name type="ordered locus">PC1_3956</name>
</gene>
<sequence length="420" mass="45149">MRYDVVIIGGGLAGLTCGIRLAEQGKRCAIVSAGQNALHFSSGALDLLSHLPDGQPVSQPLEALDELARQAPHHPYSRMGAAAVAALLPQVEALLERSTISLLGSYQQNHWRMTPLGKFRACWLSPVDGVTRGLPDSRFGDNPLIAGIEGFLDFQSRIVAGTLQAQGIAARSDDLKLPVLDRLRQNPSEFRAVNIARVLDRPENRAALVEELSLLANGNDAIIMPACLGLDSPEVVGELAEALGKPISLLPTLPPSVLGLRLHQALSQRFRQLGGMVMPGDRAVRASLSAQEIAVHSHHHRDIPLRAKYAVLASGSFFSNGLVTQFDRVTEPVFGLDVRFAEQREGWSQQDVFVPQPYMQFGAIVDEHLHPRIGGETIGNLYAIGAVLEGFDPIAQGCGAGVSLLSALHVAEQILKEGNL</sequence>
<organism>
    <name type="scientific">Pectobacterium carotovorum subsp. carotovorum (strain PC1)</name>
    <dbReference type="NCBI Taxonomy" id="561230"/>
    <lineage>
        <taxon>Bacteria</taxon>
        <taxon>Pseudomonadati</taxon>
        <taxon>Pseudomonadota</taxon>
        <taxon>Gammaproteobacteria</taxon>
        <taxon>Enterobacterales</taxon>
        <taxon>Pectobacteriaceae</taxon>
        <taxon>Pectobacterium</taxon>
    </lineage>
</organism>
<evidence type="ECO:0000255" key="1">
    <source>
        <dbReference type="HAMAP-Rule" id="MF_00753"/>
    </source>
</evidence>
<name>GLPB_PECCP</name>
<keyword id="KW-0285">Flavoprotein</keyword>
<keyword id="KW-0288">FMN</keyword>
<keyword id="KW-0560">Oxidoreductase</keyword>
<reference key="1">
    <citation type="submission" date="2009-07" db="EMBL/GenBank/DDBJ databases">
        <title>Complete sequence of Pectobacterium carotovorum subsp. carotovorum PC1.</title>
        <authorList>
            <consortium name="US DOE Joint Genome Institute"/>
            <person name="Lucas S."/>
            <person name="Copeland A."/>
            <person name="Lapidus A."/>
            <person name="Glavina del Rio T."/>
            <person name="Tice H."/>
            <person name="Bruce D."/>
            <person name="Goodwin L."/>
            <person name="Pitluck S."/>
            <person name="Munk A.C."/>
            <person name="Brettin T."/>
            <person name="Detter J.C."/>
            <person name="Han C."/>
            <person name="Tapia R."/>
            <person name="Larimer F."/>
            <person name="Land M."/>
            <person name="Hauser L."/>
            <person name="Kyrpides N."/>
            <person name="Mikhailova N."/>
            <person name="Balakrishnan V."/>
            <person name="Glasner J."/>
            <person name="Perna N.T."/>
        </authorList>
    </citation>
    <scope>NUCLEOTIDE SEQUENCE [LARGE SCALE GENOMIC DNA]</scope>
    <source>
        <strain>PC1</strain>
    </source>
</reference>
<feature type="chain" id="PRO_1000212851" description="Anaerobic glycerol-3-phosphate dehydrogenase subunit B">
    <location>
        <begin position="1"/>
        <end position="420"/>
    </location>
</feature>
<protein>
    <recommendedName>
        <fullName evidence="1">Anaerobic glycerol-3-phosphate dehydrogenase subunit B</fullName>
        <shortName evidence="1">Anaerobic G-3-P dehydrogenase subunit B</shortName>
        <shortName evidence="1">Anaerobic G3Pdhase B</shortName>
        <ecNumber evidence="1">1.1.5.3</ecNumber>
    </recommendedName>
</protein>